<accession>A7TKU9</accession>
<dbReference type="EMBL" id="DS480410">
    <property type="protein sequence ID" value="EDO17104.1"/>
    <property type="molecule type" value="Genomic_DNA"/>
</dbReference>
<dbReference type="RefSeq" id="XP_001644962.1">
    <property type="nucleotide sequence ID" value="XM_001644912.1"/>
</dbReference>
<dbReference type="FunCoup" id="A7TKU9">
    <property type="interactions" value="289"/>
</dbReference>
<dbReference type="STRING" id="436907.A7TKU9"/>
<dbReference type="GeneID" id="5545296"/>
<dbReference type="KEGG" id="vpo:Kpol_1025p24"/>
<dbReference type="eggNOG" id="ENOG502S2IS">
    <property type="taxonomic scope" value="Eukaryota"/>
</dbReference>
<dbReference type="HOGENOM" id="CLU_1372424_0_0_1"/>
<dbReference type="InParanoid" id="A7TKU9"/>
<dbReference type="OMA" id="PKAYLHQ"/>
<dbReference type="OrthoDB" id="4068648at2759"/>
<dbReference type="PhylomeDB" id="A7TKU9"/>
<dbReference type="Proteomes" id="UP000000267">
    <property type="component" value="Unassembled WGS sequence"/>
</dbReference>
<dbReference type="GO" id="GO:0030686">
    <property type="term" value="C:90S preribosome"/>
    <property type="evidence" value="ECO:0007669"/>
    <property type="project" value="EnsemblFungi"/>
</dbReference>
<dbReference type="GO" id="GO:0005730">
    <property type="term" value="C:nucleolus"/>
    <property type="evidence" value="ECO:0007669"/>
    <property type="project" value="UniProtKB-SubCell"/>
</dbReference>
<dbReference type="GO" id="GO:0030688">
    <property type="term" value="C:preribosome, small subunit precursor"/>
    <property type="evidence" value="ECO:0007669"/>
    <property type="project" value="EnsemblFungi"/>
</dbReference>
<dbReference type="GO" id="GO:0032040">
    <property type="term" value="C:small-subunit processome"/>
    <property type="evidence" value="ECO:0007669"/>
    <property type="project" value="EnsemblFungi"/>
</dbReference>
<dbReference type="GO" id="GO:0051880">
    <property type="term" value="F:G-quadruplex DNA binding"/>
    <property type="evidence" value="ECO:0007669"/>
    <property type="project" value="EnsemblFungi"/>
</dbReference>
<dbReference type="GO" id="GO:0000462">
    <property type="term" value="P:maturation of SSU-rRNA from tricistronic rRNA transcript (SSU-rRNA, 5.8S rRNA, LSU-rRNA)"/>
    <property type="evidence" value="ECO:0007669"/>
    <property type="project" value="EnsemblFungi"/>
</dbReference>
<dbReference type="GO" id="GO:0000056">
    <property type="term" value="P:ribosomal small subunit export from nucleus"/>
    <property type="evidence" value="ECO:0007669"/>
    <property type="project" value="EnsemblFungi"/>
</dbReference>
<dbReference type="InterPro" id="IPR028160">
    <property type="entry name" value="Slx9-like"/>
</dbReference>
<dbReference type="Pfam" id="PF15341">
    <property type="entry name" value="SLX9"/>
    <property type="match status" value="1"/>
</dbReference>
<proteinExistence type="inferred from homology"/>
<protein>
    <recommendedName>
        <fullName>Ribosome biogenesis protein SLX9</fullName>
    </recommendedName>
</protein>
<organism>
    <name type="scientific">Vanderwaltozyma polyspora (strain ATCC 22028 / DSM 70294 / BCRC 21397 / CBS 2163 / NBRC 10782 / NRRL Y-8283 / UCD 57-17)</name>
    <name type="common">Kluyveromyces polysporus</name>
    <dbReference type="NCBI Taxonomy" id="436907"/>
    <lineage>
        <taxon>Eukaryota</taxon>
        <taxon>Fungi</taxon>
        <taxon>Dikarya</taxon>
        <taxon>Ascomycota</taxon>
        <taxon>Saccharomycotina</taxon>
        <taxon>Saccharomycetes</taxon>
        <taxon>Saccharomycetales</taxon>
        <taxon>Saccharomycetaceae</taxon>
        <taxon>Vanderwaltozyma</taxon>
    </lineage>
</organism>
<sequence>MVAKKRNTLRSKAAAGRNAKTSVLEDSVLNELPPDPKAFLHQHRESKRDKQNTKQQSFLSQIKNKSLGLDSNLAGISKSAARRRKRKIRDDLKPKMGELLTSLEKEEDLKEYTQDQDDSKDADGDEQMEISINNVTKITKSNKYGKLSHELPGSVKIKKNQPSIRNQKGAKQLAIDESKRFNQVLTNQSFQQNPFGSLREIIKMQK</sequence>
<gene>
    <name type="primary">SLX9</name>
    <name type="ORF">Kpol_1025p24</name>
</gene>
<comment type="function">
    <text evidence="1">Involved in ribosome biogenesis. Required for normal pre-rRNA processing in internal transcribed spacer 1 (ITS1). May be involved in the movements of the replication forks (By similarity).</text>
</comment>
<comment type="subunit">
    <text evidence="1">Interacts with the 35S, 23S and 20S pre-rRNAs and with the U3 snoRNA.</text>
</comment>
<comment type="subcellular location">
    <subcellularLocation>
        <location evidence="1">Nucleus</location>
        <location evidence="1">Nucleolus</location>
    </subcellularLocation>
</comment>
<comment type="similarity">
    <text evidence="3">Belongs to the SLX9 family.</text>
</comment>
<evidence type="ECO:0000250" key="1"/>
<evidence type="ECO:0000256" key="2">
    <source>
        <dbReference type="SAM" id="MobiDB-lite"/>
    </source>
</evidence>
<evidence type="ECO:0000305" key="3"/>
<feature type="chain" id="PRO_0000333453" description="Ribosome biogenesis protein SLX9">
    <location>
        <begin position="1"/>
        <end position="206"/>
    </location>
</feature>
<feature type="region of interest" description="Disordered" evidence="2">
    <location>
        <begin position="1"/>
        <end position="58"/>
    </location>
</feature>
<feature type="region of interest" description="Disordered" evidence="2">
    <location>
        <begin position="105"/>
        <end position="125"/>
    </location>
</feature>
<feature type="compositionally biased region" description="Basic and acidic residues" evidence="2">
    <location>
        <begin position="42"/>
        <end position="52"/>
    </location>
</feature>
<feature type="compositionally biased region" description="Basic and acidic residues" evidence="2">
    <location>
        <begin position="105"/>
        <end position="122"/>
    </location>
</feature>
<name>SLX9_VANPO</name>
<keyword id="KW-0539">Nucleus</keyword>
<keyword id="KW-1185">Reference proteome</keyword>
<keyword id="KW-0690">Ribosome biogenesis</keyword>
<keyword id="KW-0698">rRNA processing</keyword>
<reference key="1">
    <citation type="journal article" date="2007" name="Proc. Natl. Acad. Sci. U.S.A.">
        <title>Independent sorting-out of thousands of duplicated gene pairs in two yeast species descended from a whole-genome duplication.</title>
        <authorList>
            <person name="Scannell D.R."/>
            <person name="Frank A.C."/>
            <person name="Conant G.C."/>
            <person name="Byrne K.P."/>
            <person name="Woolfit M."/>
            <person name="Wolfe K.H."/>
        </authorList>
    </citation>
    <scope>NUCLEOTIDE SEQUENCE [LARGE SCALE GENOMIC DNA]</scope>
    <source>
        <strain>ATCC 22028 / DSM 70294 / BCRC 21397 / CBS 2163 / NBRC 10782 / NRRL Y-8283 / UCD 57-17</strain>
    </source>
</reference>